<sequence length="428" mass="46240">MNQSEVLFAQARTVISGGVNSPVRAFNGVGGNPIFFTRGKGAYLFDVDGNKYIDYVASWGPMILGHANQEVINAIKTNLENGLSFGAPTHIETMLAEKVCELIPSIELVRMVSSGTEATMSAIRLARGYTGRDKIIKFEGCYHGHSDALLVKAGSAALTLGVPTSPGVPKDFAKHTLTLEYNNINQVYEILKEVGTEVACIIVEPVAGNMNCILPIDGFLQGLRKLCDEYGIILIFDEVMTGFRVALGGAQEFYNVEPDLTTLGKIIGGGLPVGIFGGKCEIMKCIAPLGPIYQAGTLSGNPISMSAGLAMLNVLSKDKNFYTTLNIKVQKLTKGFLAKAKENNIGMTANVVGGMFGLFFTDAKSVTNFKEVSQCNVELFKRFYHLMLEEGVYMTPSIYETDFISSAHSDMDIQNTIDAAGRVFAKLV</sequence>
<feature type="chain" id="PRO_0000300958" description="Glutamate-1-semialdehyde 2,1-aminomutase">
    <location>
        <begin position="1"/>
        <end position="428"/>
    </location>
</feature>
<feature type="modified residue" description="N6-(pyridoxal phosphate)lysine" evidence="1">
    <location>
        <position position="265"/>
    </location>
</feature>
<protein>
    <recommendedName>
        <fullName evidence="1">Glutamate-1-semialdehyde 2,1-aminomutase</fullName>
        <shortName evidence="1">GSA</shortName>
        <ecNumber evidence="1">5.4.3.8</ecNumber>
    </recommendedName>
    <alternativeName>
        <fullName evidence="1">Glutamate-1-semialdehyde aminotransferase</fullName>
        <shortName evidence="1">GSA-AT</shortName>
    </alternativeName>
</protein>
<reference key="1">
    <citation type="journal article" date="2007" name="Curr. Biol.">
        <title>Reduced genome of the thioautotrophic intracellular symbiont in a deep-sea clam, Calyptogena okutanii.</title>
        <authorList>
            <person name="Kuwahara H."/>
            <person name="Yoshida T."/>
            <person name="Takaki Y."/>
            <person name="Shimamura S."/>
            <person name="Nishi S."/>
            <person name="Harada M."/>
            <person name="Matsuyama K."/>
            <person name="Takishita K."/>
            <person name="Kawato M."/>
            <person name="Uematsu K."/>
            <person name="Fujiwara Y."/>
            <person name="Sato T."/>
            <person name="Kato C."/>
            <person name="Kitagawa M."/>
            <person name="Kato I."/>
            <person name="Maruyama T."/>
        </authorList>
    </citation>
    <scope>NUCLEOTIDE SEQUENCE [LARGE SCALE GENOMIC DNA]</scope>
    <source>
        <strain>HA</strain>
    </source>
</reference>
<proteinExistence type="inferred from homology"/>
<organism>
    <name type="scientific">Vesicomyosocius okutanii subsp. Calyptogena okutanii (strain HA)</name>
    <dbReference type="NCBI Taxonomy" id="412965"/>
    <lineage>
        <taxon>Bacteria</taxon>
        <taxon>Pseudomonadati</taxon>
        <taxon>Pseudomonadota</taxon>
        <taxon>Gammaproteobacteria</taxon>
        <taxon>Candidatus Pseudothioglobaceae</taxon>
        <taxon>Candidatus Vesicomyosocius</taxon>
    </lineage>
</organism>
<comment type="catalytic activity">
    <reaction evidence="1">
        <text>(S)-4-amino-5-oxopentanoate = 5-aminolevulinate</text>
        <dbReference type="Rhea" id="RHEA:14265"/>
        <dbReference type="ChEBI" id="CHEBI:57501"/>
        <dbReference type="ChEBI" id="CHEBI:356416"/>
        <dbReference type="EC" id="5.4.3.8"/>
    </reaction>
</comment>
<comment type="cofactor">
    <cofactor evidence="1">
        <name>pyridoxal 5'-phosphate</name>
        <dbReference type="ChEBI" id="CHEBI:597326"/>
    </cofactor>
</comment>
<comment type="pathway">
    <text evidence="1">Porphyrin-containing compound metabolism; protoporphyrin-IX biosynthesis; 5-aminolevulinate from L-glutamyl-tRNA(Glu): step 2/2.</text>
</comment>
<comment type="subunit">
    <text evidence="1">Homodimer.</text>
</comment>
<comment type="subcellular location">
    <subcellularLocation>
        <location evidence="1">Cytoplasm</location>
    </subcellularLocation>
</comment>
<comment type="similarity">
    <text evidence="1">Belongs to the class-III pyridoxal-phosphate-dependent aminotransferase family. HemL subfamily.</text>
</comment>
<evidence type="ECO:0000255" key="1">
    <source>
        <dbReference type="HAMAP-Rule" id="MF_00375"/>
    </source>
</evidence>
<dbReference type="EC" id="5.4.3.8" evidence="1"/>
<dbReference type="EMBL" id="AP009247">
    <property type="protein sequence ID" value="BAF61346.1"/>
    <property type="molecule type" value="Genomic_DNA"/>
</dbReference>
<dbReference type="RefSeq" id="WP_011929616.1">
    <property type="nucleotide sequence ID" value="NC_009465.1"/>
</dbReference>
<dbReference type="SMR" id="A5CXH8"/>
<dbReference type="STRING" id="412965.COSY_0216"/>
<dbReference type="KEGG" id="vok:COSY_0216"/>
<dbReference type="eggNOG" id="COG0001">
    <property type="taxonomic scope" value="Bacteria"/>
</dbReference>
<dbReference type="HOGENOM" id="CLU_016922_1_5_6"/>
<dbReference type="OrthoDB" id="9801052at2"/>
<dbReference type="UniPathway" id="UPA00251">
    <property type="reaction ID" value="UER00317"/>
</dbReference>
<dbReference type="Proteomes" id="UP000000247">
    <property type="component" value="Chromosome"/>
</dbReference>
<dbReference type="GO" id="GO:0005737">
    <property type="term" value="C:cytoplasm"/>
    <property type="evidence" value="ECO:0007669"/>
    <property type="project" value="UniProtKB-SubCell"/>
</dbReference>
<dbReference type="GO" id="GO:0042286">
    <property type="term" value="F:glutamate-1-semialdehyde 2,1-aminomutase activity"/>
    <property type="evidence" value="ECO:0007669"/>
    <property type="project" value="UniProtKB-UniRule"/>
</dbReference>
<dbReference type="GO" id="GO:0030170">
    <property type="term" value="F:pyridoxal phosphate binding"/>
    <property type="evidence" value="ECO:0007669"/>
    <property type="project" value="InterPro"/>
</dbReference>
<dbReference type="GO" id="GO:0008483">
    <property type="term" value="F:transaminase activity"/>
    <property type="evidence" value="ECO:0007669"/>
    <property type="project" value="InterPro"/>
</dbReference>
<dbReference type="GO" id="GO:0006782">
    <property type="term" value="P:protoporphyrinogen IX biosynthetic process"/>
    <property type="evidence" value="ECO:0007669"/>
    <property type="project" value="UniProtKB-UniRule"/>
</dbReference>
<dbReference type="CDD" id="cd00610">
    <property type="entry name" value="OAT_like"/>
    <property type="match status" value="1"/>
</dbReference>
<dbReference type="FunFam" id="3.40.640.10:FF:000021">
    <property type="entry name" value="Glutamate-1-semialdehyde 2,1-aminomutase"/>
    <property type="match status" value="1"/>
</dbReference>
<dbReference type="Gene3D" id="3.90.1150.10">
    <property type="entry name" value="Aspartate Aminotransferase, domain 1"/>
    <property type="match status" value="1"/>
</dbReference>
<dbReference type="Gene3D" id="3.40.640.10">
    <property type="entry name" value="Type I PLP-dependent aspartate aminotransferase-like (Major domain)"/>
    <property type="match status" value="1"/>
</dbReference>
<dbReference type="HAMAP" id="MF_00375">
    <property type="entry name" value="HemL_aminotrans_3"/>
    <property type="match status" value="1"/>
</dbReference>
<dbReference type="InterPro" id="IPR004639">
    <property type="entry name" value="4pyrrol_synth_GluAld_NH2Trfase"/>
</dbReference>
<dbReference type="InterPro" id="IPR005814">
    <property type="entry name" value="Aminotrans_3"/>
</dbReference>
<dbReference type="InterPro" id="IPR049704">
    <property type="entry name" value="Aminotrans_3_PPA_site"/>
</dbReference>
<dbReference type="InterPro" id="IPR015424">
    <property type="entry name" value="PyrdxlP-dep_Trfase"/>
</dbReference>
<dbReference type="InterPro" id="IPR015421">
    <property type="entry name" value="PyrdxlP-dep_Trfase_major"/>
</dbReference>
<dbReference type="InterPro" id="IPR015422">
    <property type="entry name" value="PyrdxlP-dep_Trfase_small"/>
</dbReference>
<dbReference type="NCBIfam" id="TIGR00713">
    <property type="entry name" value="hemL"/>
    <property type="match status" value="1"/>
</dbReference>
<dbReference type="NCBIfam" id="NF000818">
    <property type="entry name" value="PRK00062.1"/>
    <property type="match status" value="1"/>
</dbReference>
<dbReference type="PANTHER" id="PTHR43713">
    <property type="entry name" value="GLUTAMATE-1-SEMIALDEHYDE 2,1-AMINOMUTASE"/>
    <property type="match status" value="1"/>
</dbReference>
<dbReference type="PANTHER" id="PTHR43713:SF3">
    <property type="entry name" value="GLUTAMATE-1-SEMIALDEHYDE 2,1-AMINOMUTASE 1, CHLOROPLASTIC-RELATED"/>
    <property type="match status" value="1"/>
</dbReference>
<dbReference type="Pfam" id="PF00202">
    <property type="entry name" value="Aminotran_3"/>
    <property type="match status" value="1"/>
</dbReference>
<dbReference type="SUPFAM" id="SSF53383">
    <property type="entry name" value="PLP-dependent transferases"/>
    <property type="match status" value="1"/>
</dbReference>
<dbReference type="PROSITE" id="PS00600">
    <property type="entry name" value="AA_TRANSFER_CLASS_3"/>
    <property type="match status" value="1"/>
</dbReference>
<keyword id="KW-0963">Cytoplasm</keyword>
<keyword id="KW-0413">Isomerase</keyword>
<keyword id="KW-0627">Porphyrin biosynthesis</keyword>
<keyword id="KW-0663">Pyridoxal phosphate</keyword>
<keyword id="KW-1185">Reference proteome</keyword>
<accession>A5CXH8</accession>
<gene>
    <name evidence="1" type="primary">hemL</name>
    <name type="ordered locus">COSY_0216</name>
</gene>
<name>GSA_VESOH</name>